<evidence type="ECO:0000255" key="1">
    <source>
        <dbReference type="HAMAP-Rule" id="MF_01207"/>
    </source>
</evidence>
<comment type="function">
    <text evidence="1">Part of the MsrPQ system that repairs oxidized periplasmic proteins containing methionine sulfoxide residues (Met-O), using respiratory chain electrons. Thus protects these proteins from oxidative-stress damage caused by reactive species of oxygen and chlorine generated by the host defense mechanisms. MsrPQ is essential for the maintenance of envelope integrity under bleach stress, rescuing a wide series of structurally unrelated periplasmic proteins from methionine oxidation. MsrQ provides electrons for reduction to the reductase catalytic subunit MsrP, using the quinone pool of the respiratory chain.</text>
</comment>
<comment type="cofactor">
    <cofactor evidence="1">
        <name>FMN</name>
        <dbReference type="ChEBI" id="CHEBI:58210"/>
    </cofactor>
    <text evidence="1">Binds 1 FMN per subunit.</text>
</comment>
<comment type="cofactor">
    <cofactor evidence="1">
        <name>heme b</name>
        <dbReference type="ChEBI" id="CHEBI:60344"/>
    </cofactor>
    <text evidence="1">Binds 1 heme b (iron(II)-protoporphyrin IX) group per subunit.</text>
</comment>
<comment type="subunit">
    <text evidence="1">Heterodimer of a catalytic subunit (MsrP) and a heme-binding subunit (MsrQ).</text>
</comment>
<comment type="subcellular location">
    <subcellularLocation>
        <location evidence="1">Cell inner membrane</location>
        <topology evidence="1">Multi-pass membrane protein</topology>
    </subcellularLocation>
</comment>
<comment type="similarity">
    <text evidence="1">Belongs to the MsrQ family.</text>
</comment>
<reference key="1">
    <citation type="journal article" date="2001" name="Proc. Natl. Acad. Sci. U.S.A.">
        <title>Complete genomic sequence of Pasteurella multocida Pm70.</title>
        <authorList>
            <person name="May B.J."/>
            <person name="Zhang Q."/>
            <person name="Li L.L."/>
            <person name="Paustian M.L."/>
            <person name="Whittam T.S."/>
            <person name="Kapur V."/>
        </authorList>
    </citation>
    <scope>NUCLEOTIDE SEQUENCE [LARGE SCALE GENOMIC DNA]</scope>
    <source>
        <strain>Pm70</strain>
    </source>
</reference>
<sequence>MLSLFRIIIHVCCLGPVAWLAWVLLSGDESQLGADPIKEIQHFLGFSALTILLIMFILGKVFYLLKQPQLQVLRRALGLWAWFYVVLHVYAYLALELGYDFSLFVQELVNRGYLIIGAIAFLILTLMALSSWSYLKLKMGKWWFYLHQLGYYALLLGAIHYVWSVKNVTFSSMLYLILSIMILCDALYGLFIKRKGRSTSAHTGKD</sequence>
<dbReference type="EMBL" id="AE004439">
    <property type="protein sequence ID" value="AAK02622.1"/>
    <property type="molecule type" value="Genomic_DNA"/>
</dbReference>
<dbReference type="RefSeq" id="WP_010906713.1">
    <property type="nucleotide sequence ID" value="NC_002663.1"/>
</dbReference>
<dbReference type="SMR" id="Q9CN97"/>
<dbReference type="STRING" id="272843.PM0538"/>
<dbReference type="EnsemblBacteria" id="AAK02622">
    <property type="protein sequence ID" value="AAK02622"/>
    <property type="gene ID" value="PM0538"/>
</dbReference>
<dbReference type="KEGG" id="pmu:PM0538"/>
<dbReference type="PATRIC" id="fig|272843.6.peg.545"/>
<dbReference type="HOGENOM" id="CLU_080662_1_0_6"/>
<dbReference type="OrthoDB" id="9788328at2"/>
<dbReference type="Proteomes" id="UP000000809">
    <property type="component" value="Chromosome"/>
</dbReference>
<dbReference type="GO" id="GO:0005886">
    <property type="term" value="C:plasma membrane"/>
    <property type="evidence" value="ECO:0007669"/>
    <property type="project" value="UniProtKB-SubCell"/>
</dbReference>
<dbReference type="GO" id="GO:0009055">
    <property type="term" value="F:electron transfer activity"/>
    <property type="evidence" value="ECO:0007669"/>
    <property type="project" value="UniProtKB-UniRule"/>
</dbReference>
<dbReference type="GO" id="GO:0010181">
    <property type="term" value="F:FMN binding"/>
    <property type="evidence" value="ECO:0007669"/>
    <property type="project" value="UniProtKB-UniRule"/>
</dbReference>
<dbReference type="GO" id="GO:0020037">
    <property type="term" value="F:heme binding"/>
    <property type="evidence" value="ECO:0007669"/>
    <property type="project" value="UniProtKB-UniRule"/>
</dbReference>
<dbReference type="GO" id="GO:0046872">
    <property type="term" value="F:metal ion binding"/>
    <property type="evidence" value="ECO:0007669"/>
    <property type="project" value="UniProtKB-KW"/>
</dbReference>
<dbReference type="GO" id="GO:0016679">
    <property type="term" value="F:oxidoreductase activity, acting on diphenols and related substances as donors"/>
    <property type="evidence" value="ECO:0007669"/>
    <property type="project" value="TreeGrafter"/>
</dbReference>
<dbReference type="GO" id="GO:0030091">
    <property type="term" value="P:protein repair"/>
    <property type="evidence" value="ECO:0007669"/>
    <property type="project" value="UniProtKB-UniRule"/>
</dbReference>
<dbReference type="HAMAP" id="MF_01207">
    <property type="entry name" value="MsrQ"/>
    <property type="match status" value="1"/>
</dbReference>
<dbReference type="InterPro" id="IPR013130">
    <property type="entry name" value="Fe3_Rdtase_TM_dom"/>
</dbReference>
<dbReference type="InterPro" id="IPR022837">
    <property type="entry name" value="MsrQ-like"/>
</dbReference>
<dbReference type="PANTHER" id="PTHR36964">
    <property type="entry name" value="PROTEIN-METHIONINE-SULFOXIDE REDUCTASE HEME-BINDING SUBUNIT MSRQ"/>
    <property type="match status" value="1"/>
</dbReference>
<dbReference type="PANTHER" id="PTHR36964:SF1">
    <property type="entry name" value="PROTEIN-METHIONINE-SULFOXIDE REDUCTASE HEME-BINDING SUBUNIT MSRQ"/>
    <property type="match status" value="1"/>
</dbReference>
<dbReference type="Pfam" id="PF01794">
    <property type="entry name" value="Ferric_reduct"/>
    <property type="match status" value="1"/>
</dbReference>
<accession>Q9CN97</accession>
<feature type="chain" id="PRO_0000091577" description="Protein-methionine-sulfoxide reductase heme-binding subunit MsrQ">
    <location>
        <begin position="1"/>
        <end position="206"/>
    </location>
</feature>
<feature type="transmembrane region" description="Helical" evidence="1">
    <location>
        <begin position="7"/>
        <end position="27"/>
    </location>
</feature>
<feature type="transmembrane region" description="Helical" evidence="1">
    <location>
        <begin position="43"/>
        <end position="63"/>
    </location>
</feature>
<feature type="transmembrane region" description="Helical" evidence="1">
    <location>
        <begin position="77"/>
        <end position="97"/>
    </location>
</feature>
<feature type="transmembrane region" description="Helical" evidence="1">
    <location>
        <begin position="112"/>
        <end position="132"/>
    </location>
</feature>
<feature type="transmembrane region" description="Helical" evidence="1">
    <location>
        <begin position="142"/>
        <end position="162"/>
    </location>
</feature>
<feature type="transmembrane region" description="Helical" evidence="1">
    <location>
        <begin position="172"/>
        <end position="192"/>
    </location>
</feature>
<organism>
    <name type="scientific">Pasteurella multocida (strain Pm70)</name>
    <dbReference type="NCBI Taxonomy" id="272843"/>
    <lineage>
        <taxon>Bacteria</taxon>
        <taxon>Pseudomonadati</taxon>
        <taxon>Pseudomonadota</taxon>
        <taxon>Gammaproteobacteria</taxon>
        <taxon>Pasteurellales</taxon>
        <taxon>Pasteurellaceae</taxon>
        <taxon>Pasteurella</taxon>
    </lineage>
</organism>
<gene>
    <name evidence="1" type="primary">msrQ</name>
    <name type="ordered locus">PM0538</name>
</gene>
<protein>
    <recommendedName>
        <fullName evidence="1">Protein-methionine-sulfoxide reductase heme-binding subunit MsrQ</fullName>
    </recommendedName>
    <alternativeName>
        <fullName evidence="1">Flavocytochrome MsrQ</fullName>
    </alternativeName>
</protein>
<keyword id="KW-0997">Cell inner membrane</keyword>
<keyword id="KW-1003">Cell membrane</keyword>
<keyword id="KW-0249">Electron transport</keyword>
<keyword id="KW-0285">Flavoprotein</keyword>
<keyword id="KW-0288">FMN</keyword>
<keyword id="KW-0349">Heme</keyword>
<keyword id="KW-0408">Iron</keyword>
<keyword id="KW-0472">Membrane</keyword>
<keyword id="KW-0479">Metal-binding</keyword>
<keyword id="KW-1185">Reference proteome</keyword>
<keyword id="KW-0812">Transmembrane</keyword>
<keyword id="KW-1133">Transmembrane helix</keyword>
<keyword id="KW-0813">Transport</keyword>
<name>MSRQ_PASMU</name>
<proteinExistence type="inferred from homology"/>